<evidence type="ECO:0000255" key="1"/>
<evidence type="ECO:0000256" key="2">
    <source>
        <dbReference type="SAM" id="MobiDB-lite"/>
    </source>
</evidence>
<evidence type="ECO:0000269" key="3">
    <source>
    </source>
</evidence>
<evidence type="ECO:0000305" key="4"/>
<proteinExistence type="evidence at transcript level"/>
<gene>
    <name type="primary">B3GALT7</name>
    <name type="ordered locus">At1g77810</name>
    <name type="ORF">F28K19.2</name>
    <name type="ORF">T32E8.14</name>
</gene>
<protein>
    <recommendedName>
        <fullName>Beta-1,3-galactosyltransferase 7</fullName>
        <ecNumber>2.4.1.-</ecNumber>
    </recommendedName>
</protein>
<comment type="function">
    <text evidence="3">Beta-1,3-galactosyltransferase that transfers galactose from UDP-galactose to substrates with a terminal glycosyl residue.</text>
</comment>
<comment type="cofactor">
    <cofactor evidence="4">
        <name>Mn(2+)</name>
        <dbReference type="ChEBI" id="CHEBI:29035"/>
    </cofactor>
</comment>
<comment type="pathway">
    <text>Protein modification; protein glycosylation.</text>
</comment>
<comment type="subcellular location">
    <subcellularLocation>
        <location evidence="3">Golgi apparatus membrane</location>
        <topology evidence="3">Single-pass type II membrane protein</topology>
    </subcellularLocation>
</comment>
<comment type="alternative products">
    <event type="alternative splicing"/>
    <isoform>
        <id>Q6NQB7-1</id>
        <name>1</name>
        <sequence type="displayed"/>
    </isoform>
    <isoform>
        <id>Q6NQB7-2</id>
        <name>2</name>
        <sequence type="described" ref="VSP_036146 VSP_036147"/>
    </isoform>
</comment>
<comment type="tissue specificity">
    <text evidence="3">Expressed in leaves, stems, flowers and siliques.</text>
</comment>
<comment type="similarity">
    <text evidence="4">Belongs to the glycosyltransferase 31 family.</text>
</comment>
<comment type="sequence caution" evidence="4">
    <conflict type="erroneous gene model prediction">
        <sequence resource="EMBL-CDS" id="AAF17702"/>
    </conflict>
</comment>
<comment type="sequence caution" evidence="4">
    <conflict type="erroneous gene model prediction">
        <sequence resource="EMBL-CDS" id="AAG51626"/>
    </conflict>
</comment>
<sequence length="393" mass="44675">MKHKVSKRVISLKWVPFLCISFFALGAIFTSRSWEPSSDSGSQLISQHHRDHELQIVSDDCAHNKKATQEKDVTGEVLRTHEAIQDDRSLDKSVSTLSSTRSSQEMVDGSETNPRKKVFMVMGINTAFSSRKRRDSVRETWMPQGEKLERLEQEKGIVIKFMIGHSATSNSILDRAIDSEDAQHKDFLRLEHVEGYHELSAKTKIFFSTAVAKWDAEFYIKVDDDVHVNLGMLASTLARHRSKPRVYIGCMKSGPVLAQNLLNCFRTVKYHEPEYWKFGEDGNKYFRHATGQIYAISKDLANYISINQPILHKYANEDVSLGSWFIGLEVEHIDDRNFCCGTPPDCRWKAEAGDVCVASFEWSCSGICKSVERMKIVHEVCSEGEGAVWNTLL</sequence>
<reference key="1">
    <citation type="journal article" date="2000" name="Nature">
        <title>Sequence and analysis of chromosome 1 of the plant Arabidopsis thaliana.</title>
        <authorList>
            <person name="Theologis A."/>
            <person name="Ecker J.R."/>
            <person name="Palm C.J."/>
            <person name="Federspiel N.A."/>
            <person name="Kaul S."/>
            <person name="White O."/>
            <person name="Alonso J."/>
            <person name="Altafi H."/>
            <person name="Araujo R."/>
            <person name="Bowman C.L."/>
            <person name="Brooks S.Y."/>
            <person name="Buehler E."/>
            <person name="Chan A."/>
            <person name="Chao Q."/>
            <person name="Chen H."/>
            <person name="Cheuk R.F."/>
            <person name="Chin C.W."/>
            <person name="Chung M.K."/>
            <person name="Conn L."/>
            <person name="Conway A.B."/>
            <person name="Conway A.R."/>
            <person name="Creasy T.H."/>
            <person name="Dewar K."/>
            <person name="Dunn P."/>
            <person name="Etgu P."/>
            <person name="Feldblyum T.V."/>
            <person name="Feng J.-D."/>
            <person name="Fong B."/>
            <person name="Fujii C.Y."/>
            <person name="Gill J.E."/>
            <person name="Goldsmith A.D."/>
            <person name="Haas B."/>
            <person name="Hansen N.F."/>
            <person name="Hughes B."/>
            <person name="Huizar L."/>
            <person name="Hunter J.L."/>
            <person name="Jenkins J."/>
            <person name="Johnson-Hopson C."/>
            <person name="Khan S."/>
            <person name="Khaykin E."/>
            <person name="Kim C.J."/>
            <person name="Koo H.L."/>
            <person name="Kremenetskaia I."/>
            <person name="Kurtz D.B."/>
            <person name="Kwan A."/>
            <person name="Lam B."/>
            <person name="Langin-Hooper S."/>
            <person name="Lee A."/>
            <person name="Lee J.M."/>
            <person name="Lenz C.A."/>
            <person name="Li J.H."/>
            <person name="Li Y.-P."/>
            <person name="Lin X."/>
            <person name="Liu S.X."/>
            <person name="Liu Z.A."/>
            <person name="Luros J.S."/>
            <person name="Maiti R."/>
            <person name="Marziali A."/>
            <person name="Militscher J."/>
            <person name="Miranda M."/>
            <person name="Nguyen M."/>
            <person name="Nierman W.C."/>
            <person name="Osborne B.I."/>
            <person name="Pai G."/>
            <person name="Peterson J."/>
            <person name="Pham P.K."/>
            <person name="Rizzo M."/>
            <person name="Rooney T."/>
            <person name="Rowley D."/>
            <person name="Sakano H."/>
            <person name="Salzberg S.L."/>
            <person name="Schwartz J.R."/>
            <person name="Shinn P."/>
            <person name="Southwick A.M."/>
            <person name="Sun H."/>
            <person name="Tallon L.J."/>
            <person name="Tambunga G."/>
            <person name="Toriumi M.J."/>
            <person name="Town C.D."/>
            <person name="Utterback T."/>
            <person name="Van Aken S."/>
            <person name="Vaysberg M."/>
            <person name="Vysotskaia V.S."/>
            <person name="Walker M."/>
            <person name="Wu D."/>
            <person name="Yu G."/>
            <person name="Fraser C.M."/>
            <person name="Venter J.C."/>
            <person name="Davis R.W."/>
        </authorList>
    </citation>
    <scope>NUCLEOTIDE SEQUENCE [LARGE SCALE GENOMIC DNA]</scope>
    <source>
        <strain>cv. Columbia</strain>
    </source>
</reference>
<reference key="2">
    <citation type="journal article" date="2017" name="Plant J.">
        <title>Araport11: a complete reannotation of the Arabidopsis thaliana reference genome.</title>
        <authorList>
            <person name="Cheng C.Y."/>
            <person name="Krishnakumar V."/>
            <person name="Chan A.P."/>
            <person name="Thibaud-Nissen F."/>
            <person name="Schobel S."/>
            <person name="Town C.D."/>
        </authorList>
    </citation>
    <scope>GENOME REANNOTATION</scope>
    <source>
        <strain>cv. Columbia</strain>
    </source>
</reference>
<reference key="3">
    <citation type="journal article" date="2003" name="Science">
        <title>Empirical analysis of transcriptional activity in the Arabidopsis genome.</title>
        <authorList>
            <person name="Yamada K."/>
            <person name="Lim J."/>
            <person name="Dale J.M."/>
            <person name="Chen H."/>
            <person name="Shinn P."/>
            <person name="Palm C.J."/>
            <person name="Southwick A.M."/>
            <person name="Wu H.C."/>
            <person name="Kim C.J."/>
            <person name="Nguyen M."/>
            <person name="Pham P.K."/>
            <person name="Cheuk R.F."/>
            <person name="Karlin-Newmann G."/>
            <person name="Liu S.X."/>
            <person name="Lam B."/>
            <person name="Sakano H."/>
            <person name="Wu T."/>
            <person name="Yu G."/>
            <person name="Miranda M."/>
            <person name="Quach H.L."/>
            <person name="Tripp M."/>
            <person name="Chang C.H."/>
            <person name="Lee J.M."/>
            <person name="Toriumi M.J."/>
            <person name="Chan M.M."/>
            <person name="Tang C.C."/>
            <person name="Onodera C.S."/>
            <person name="Deng J.M."/>
            <person name="Akiyama K."/>
            <person name="Ansari Y."/>
            <person name="Arakawa T."/>
            <person name="Banh J."/>
            <person name="Banno F."/>
            <person name="Bowser L."/>
            <person name="Brooks S.Y."/>
            <person name="Carninci P."/>
            <person name="Chao Q."/>
            <person name="Choy N."/>
            <person name="Enju A."/>
            <person name="Goldsmith A.D."/>
            <person name="Gurjal M."/>
            <person name="Hansen N.F."/>
            <person name="Hayashizaki Y."/>
            <person name="Johnson-Hopson C."/>
            <person name="Hsuan V.W."/>
            <person name="Iida K."/>
            <person name="Karnes M."/>
            <person name="Khan S."/>
            <person name="Koesema E."/>
            <person name="Ishida J."/>
            <person name="Jiang P.X."/>
            <person name="Jones T."/>
            <person name="Kawai J."/>
            <person name="Kamiya A."/>
            <person name="Meyers C."/>
            <person name="Nakajima M."/>
            <person name="Narusaka M."/>
            <person name="Seki M."/>
            <person name="Sakurai T."/>
            <person name="Satou M."/>
            <person name="Tamse R."/>
            <person name="Vaysberg M."/>
            <person name="Wallender E.K."/>
            <person name="Wong C."/>
            <person name="Yamamura Y."/>
            <person name="Yuan S."/>
            <person name="Shinozaki K."/>
            <person name="Davis R.W."/>
            <person name="Theologis A."/>
            <person name="Ecker J.R."/>
        </authorList>
    </citation>
    <scope>NUCLEOTIDE SEQUENCE [LARGE SCALE MRNA]</scope>
    <source>
        <strain>cv. Columbia</strain>
    </source>
</reference>
<reference key="4">
    <citation type="submission" date="2005-03" db="EMBL/GenBank/DDBJ databases">
        <title>Large-scale analysis of RIKEN Arabidopsis full-length (RAFL) cDNAs.</title>
        <authorList>
            <person name="Totoki Y."/>
            <person name="Seki M."/>
            <person name="Ishida J."/>
            <person name="Nakajima M."/>
            <person name="Enju A."/>
            <person name="Kamiya A."/>
            <person name="Narusaka M."/>
            <person name="Shin-i T."/>
            <person name="Nakagawa M."/>
            <person name="Sakamoto N."/>
            <person name="Oishi K."/>
            <person name="Kohara Y."/>
            <person name="Kobayashi M."/>
            <person name="Toyoda A."/>
            <person name="Sakaki Y."/>
            <person name="Sakurai T."/>
            <person name="Iida K."/>
            <person name="Akiyama K."/>
            <person name="Satou M."/>
            <person name="Toyoda T."/>
            <person name="Konagaya A."/>
            <person name="Carninci P."/>
            <person name="Kawai J."/>
            <person name="Hayashizaki Y."/>
            <person name="Shinozaki K."/>
        </authorList>
    </citation>
    <scope>NUCLEOTIDE SEQUENCE [LARGE SCALE MRNA]</scope>
    <source>
        <strain>cv. Columbia</strain>
    </source>
</reference>
<reference key="5">
    <citation type="journal article" date="2008" name="Plant Mol. Biol.">
        <title>Identification of a novel group of putative Arabidopsis thaliana beta-(1,3)-galactosyltransferases.</title>
        <authorList>
            <person name="Qu Y."/>
            <person name="Egelund J."/>
            <person name="Gilson P.R."/>
            <person name="Houghton F."/>
            <person name="Gleeson P.A."/>
            <person name="Schultz C.J."/>
            <person name="Bacic A."/>
        </authorList>
    </citation>
    <scope>FUNCTION</scope>
    <scope>SUBCELLULAR LOCATION</scope>
    <scope>TISSUE SPECIFICITY</scope>
    <scope>GENE FAMILY</scope>
    <scope>NOMENCLATURE</scope>
</reference>
<keyword id="KW-0025">Alternative splicing</keyword>
<keyword id="KW-0328">Glycosyltransferase</keyword>
<keyword id="KW-0333">Golgi apparatus</keyword>
<keyword id="KW-0464">Manganese</keyword>
<keyword id="KW-0472">Membrane</keyword>
<keyword id="KW-1185">Reference proteome</keyword>
<keyword id="KW-0735">Signal-anchor</keyword>
<keyword id="KW-0808">Transferase</keyword>
<keyword id="KW-0812">Transmembrane</keyword>
<keyword id="KW-1133">Transmembrane helix</keyword>
<accession>Q6NQB7</accession>
<accession>Q3ECB6</accession>
<accession>Q9CA13</accession>
<accession>Q9SH19</accession>
<feature type="chain" id="PRO_0000359417" description="Beta-1,3-galactosyltransferase 7">
    <location>
        <begin position="1"/>
        <end position="393"/>
    </location>
</feature>
<feature type="transmembrane region" description="Helical; Signal-anchor for type II membrane protein" evidence="1">
    <location>
        <begin position="9"/>
        <end position="29"/>
    </location>
</feature>
<feature type="region of interest" description="Disordered" evidence="2">
    <location>
        <begin position="89"/>
        <end position="112"/>
    </location>
</feature>
<feature type="compositionally biased region" description="Low complexity" evidence="2">
    <location>
        <begin position="93"/>
        <end position="103"/>
    </location>
</feature>
<feature type="splice variant" id="VSP_036146" description="In isoform 2." evidence="4">
    <location>
        <begin position="86"/>
        <end position="88"/>
    </location>
</feature>
<feature type="splice variant" id="VSP_036147" description="In isoform 2." evidence="4">
    <original>NLLNCFR</original>
    <variation>K</variation>
    <location>
        <begin position="260"/>
        <end position="266"/>
    </location>
</feature>
<name>B3GT7_ARATH</name>
<organism>
    <name type="scientific">Arabidopsis thaliana</name>
    <name type="common">Mouse-ear cress</name>
    <dbReference type="NCBI Taxonomy" id="3702"/>
    <lineage>
        <taxon>Eukaryota</taxon>
        <taxon>Viridiplantae</taxon>
        <taxon>Streptophyta</taxon>
        <taxon>Embryophyta</taxon>
        <taxon>Tracheophyta</taxon>
        <taxon>Spermatophyta</taxon>
        <taxon>Magnoliopsida</taxon>
        <taxon>eudicotyledons</taxon>
        <taxon>Gunneridae</taxon>
        <taxon>Pentapetalae</taxon>
        <taxon>rosids</taxon>
        <taxon>malvids</taxon>
        <taxon>Brassicales</taxon>
        <taxon>Brassicaceae</taxon>
        <taxon>Camelineae</taxon>
        <taxon>Arabidopsis</taxon>
    </lineage>
</organism>
<dbReference type="EC" id="2.4.1.-"/>
<dbReference type="EMBL" id="AC009243">
    <property type="protein sequence ID" value="AAF17702.1"/>
    <property type="status" value="ALT_SEQ"/>
    <property type="molecule type" value="Genomic_DNA"/>
</dbReference>
<dbReference type="EMBL" id="AC012193">
    <property type="protein sequence ID" value="AAG51626.1"/>
    <property type="status" value="ALT_SEQ"/>
    <property type="molecule type" value="Genomic_DNA"/>
</dbReference>
<dbReference type="EMBL" id="CP002684">
    <property type="protein sequence ID" value="AEE36030.1"/>
    <property type="molecule type" value="Genomic_DNA"/>
</dbReference>
<dbReference type="EMBL" id="BT010541">
    <property type="protein sequence ID" value="AAQ65164.1"/>
    <property type="molecule type" value="mRNA"/>
</dbReference>
<dbReference type="EMBL" id="AK175483">
    <property type="protein sequence ID" value="BAD43246.1"/>
    <property type="molecule type" value="mRNA"/>
</dbReference>
<dbReference type="EMBL" id="AK221383">
    <property type="protein sequence ID" value="BAD94299.1"/>
    <property type="molecule type" value="mRNA"/>
</dbReference>
<dbReference type="PIR" id="B96808">
    <property type="entry name" value="B96808"/>
</dbReference>
<dbReference type="RefSeq" id="NP_974164.2">
    <molecule id="Q6NQB7-2"/>
    <property type="nucleotide sequence ID" value="NM_202435.2"/>
</dbReference>
<dbReference type="SMR" id="Q6NQB7"/>
<dbReference type="FunCoup" id="Q6NQB7">
    <property type="interactions" value="2068"/>
</dbReference>
<dbReference type="STRING" id="3702.Q6NQB7"/>
<dbReference type="CAZy" id="GT31">
    <property type="family name" value="Glycosyltransferase Family 31"/>
</dbReference>
<dbReference type="PaxDb" id="3702-AT1G77810.1"/>
<dbReference type="EnsemblPlants" id="AT1G77810.2">
    <molecule id="Q6NQB7-2"/>
    <property type="protein sequence ID" value="AT1G77810.2"/>
    <property type="gene ID" value="AT1G77810"/>
</dbReference>
<dbReference type="GeneID" id="844443"/>
<dbReference type="Gramene" id="AT1G77810.2">
    <molecule id="Q6NQB7-2"/>
    <property type="protein sequence ID" value="AT1G77810.2"/>
    <property type="gene ID" value="AT1G77810"/>
</dbReference>
<dbReference type="KEGG" id="ath:AT1G77810"/>
<dbReference type="Araport" id="AT1G77810"/>
<dbReference type="TAIR" id="AT1G77810"/>
<dbReference type="eggNOG" id="KOG2288">
    <property type="taxonomic scope" value="Eukaryota"/>
</dbReference>
<dbReference type="InParanoid" id="Q6NQB7"/>
<dbReference type="OMA" id="WIVPDSR"/>
<dbReference type="OrthoDB" id="1158011at2759"/>
<dbReference type="PhylomeDB" id="Q6NQB7"/>
<dbReference type="UniPathway" id="UPA00378"/>
<dbReference type="PRO" id="PR:Q6NQB7"/>
<dbReference type="Proteomes" id="UP000006548">
    <property type="component" value="Chromosome 1"/>
</dbReference>
<dbReference type="ExpressionAtlas" id="Q6NQB7">
    <property type="expression patterns" value="baseline and differential"/>
</dbReference>
<dbReference type="GO" id="GO:0005794">
    <property type="term" value="C:Golgi apparatus"/>
    <property type="evidence" value="ECO:0000314"/>
    <property type="project" value="TAIR"/>
</dbReference>
<dbReference type="GO" id="GO:0000139">
    <property type="term" value="C:Golgi membrane"/>
    <property type="evidence" value="ECO:0007669"/>
    <property type="project" value="UniProtKB-SubCell"/>
</dbReference>
<dbReference type="GO" id="GO:0048531">
    <property type="term" value="F:beta-1,3-galactosyltransferase activity"/>
    <property type="evidence" value="ECO:0000314"/>
    <property type="project" value="TAIR"/>
</dbReference>
<dbReference type="GO" id="GO:0006486">
    <property type="term" value="P:protein glycosylation"/>
    <property type="evidence" value="ECO:0007669"/>
    <property type="project" value="UniProtKB-UniPathway"/>
</dbReference>
<dbReference type="FunFam" id="3.90.550.50:FF:000002">
    <property type="entry name" value="Hexosyltransferase"/>
    <property type="match status" value="1"/>
</dbReference>
<dbReference type="Gene3D" id="3.90.550.50">
    <property type="match status" value="1"/>
</dbReference>
<dbReference type="InterPro" id="IPR025298">
    <property type="entry name" value="DUF4094"/>
</dbReference>
<dbReference type="InterPro" id="IPR002659">
    <property type="entry name" value="Glyco_trans_31"/>
</dbReference>
<dbReference type="PANTHER" id="PTHR11214:SF226">
    <property type="entry name" value="BETA-1,3-GALACTOSYLTRANSFERASE 7"/>
    <property type="match status" value="1"/>
</dbReference>
<dbReference type="PANTHER" id="PTHR11214">
    <property type="entry name" value="BETA-1,3-N-ACETYLGLUCOSAMINYLTRANSFERASE"/>
    <property type="match status" value="1"/>
</dbReference>
<dbReference type="Pfam" id="PF13334">
    <property type="entry name" value="DUF4094"/>
    <property type="match status" value="1"/>
</dbReference>
<dbReference type="Pfam" id="PF01762">
    <property type="entry name" value="Galactosyl_T"/>
    <property type="match status" value="1"/>
</dbReference>